<dbReference type="EMBL" id="Y14083">
    <property type="protein sequence ID" value="CAA74514.1"/>
    <property type="molecule type" value="Genomic_DNA"/>
</dbReference>
<dbReference type="EMBL" id="AL009126">
    <property type="protein sequence ID" value="CAB12848.1"/>
    <property type="molecule type" value="Genomic_DNA"/>
</dbReference>
<dbReference type="PIR" id="G69829">
    <property type="entry name" value="G69829"/>
</dbReference>
<dbReference type="RefSeq" id="NP_388889.1">
    <property type="nucleotide sequence ID" value="NC_000964.3"/>
</dbReference>
<dbReference type="RefSeq" id="WP_003233218.1">
    <property type="nucleotide sequence ID" value="NZ_OZ025638.1"/>
</dbReference>
<dbReference type="FunCoup" id="O07599">
    <property type="interactions" value="31"/>
</dbReference>
<dbReference type="STRING" id="224308.BSU10080"/>
<dbReference type="PaxDb" id="224308-BSU10080"/>
<dbReference type="DNASU" id="939301"/>
<dbReference type="EnsemblBacteria" id="CAB12848">
    <property type="protein sequence ID" value="CAB12848"/>
    <property type="gene ID" value="BSU_10080"/>
</dbReference>
<dbReference type="GeneID" id="939301"/>
<dbReference type="KEGG" id="bsu:BSU10080"/>
<dbReference type="PATRIC" id="fig|224308.43.peg.1050"/>
<dbReference type="eggNOG" id="COG3069">
    <property type="taxonomic scope" value="Bacteria"/>
</dbReference>
<dbReference type="InParanoid" id="O07599"/>
<dbReference type="OrthoDB" id="8641791at2"/>
<dbReference type="PhylomeDB" id="O07599"/>
<dbReference type="BioCyc" id="BSUB:BSU10080-MONOMER"/>
<dbReference type="Proteomes" id="UP000001570">
    <property type="component" value="Chromosome"/>
</dbReference>
<dbReference type="GO" id="GO:0005886">
    <property type="term" value="C:plasma membrane"/>
    <property type="evidence" value="ECO:0007669"/>
    <property type="project" value="UniProtKB-SubCell"/>
</dbReference>
<keyword id="KW-1003">Cell membrane</keyword>
<keyword id="KW-0472">Membrane</keyword>
<keyword id="KW-1185">Reference proteome</keyword>
<keyword id="KW-0812">Transmembrane</keyword>
<keyword id="KW-1133">Transmembrane helix</keyword>
<evidence type="ECO:0000255" key="1"/>
<evidence type="ECO:0000305" key="2"/>
<accession>O07599</accession>
<accession>Q796U8</accession>
<name>YHFA_BACSU</name>
<comment type="subcellular location">
    <subcellularLocation>
        <location evidence="2">Cell membrane</location>
        <topology evidence="2">Multi-pass membrane protein</topology>
    </subcellularLocation>
</comment>
<sequence length="463" mass="48829">MMEVGILPVHVLYVFFIGAIILFMLLRKDTTFISLFGIFIISLWASHSLSASVSSLFHSFIYAAGELLPTIFIICFIVSMSDLLTKTGINEAMISPFASLVRGPVTAYWLIGGLMFAISLFFWPSPGVALIGAVLLPAAARAGLTPLAAAMAMNLFGHGFALSGDFVIQAAPKLTADAAGIPVGDVVSASIPLVLIMGVTTTTAAFIMIQRERKKQEHPTSFSPVLSGEQDNSLYLPKRLRSILAFLIPLAFLADIACMLLFNLQGNDATALIGGSAICILFTVHFFVYKHKGLEKITGYFIDGFKFGFKVFGPVIPIAAFFYLGDSGYESILGTSLPKGSHGIVNDLGIALSHMMPMSKELAATALTAAGAITGLDGSGFSGISLAGSIAKLFSSALHADPAILTALGQISAIWVGGGTLVPWALIPAAAICKVDPFELARKNFIPVAIGLLVTTLAAVMML</sequence>
<feature type="chain" id="PRO_0000375817" description="Uncharacterized membrane protein YhfA">
    <location>
        <begin position="1"/>
        <end position="463"/>
    </location>
</feature>
<feature type="transmembrane region" description="Helical" evidence="1">
    <location>
        <begin position="6"/>
        <end position="26"/>
    </location>
</feature>
<feature type="transmembrane region" description="Helical" evidence="1">
    <location>
        <begin position="31"/>
        <end position="51"/>
    </location>
</feature>
<feature type="transmembrane region" description="Helical" evidence="1">
    <location>
        <begin position="60"/>
        <end position="80"/>
    </location>
</feature>
<feature type="transmembrane region" description="Helical" evidence="1">
    <location>
        <begin position="101"/>
        <end position="123"/>
    </location>
</feature>
<feature type="transmembrane region" description="Helical" evidence="1">
    <location>
        <begin position="130"/>
        <end position="152"/>
    </location>
</feature>
<feature type="transmembrane region" description="Helical" evidence="1">
    <location>
        <begin position="189"/>
        <end position="209"/>
    </location>
</feature>
<feature type="transmembrane region" description="Helical" evidence="1">
    <location>
        <begin position="242"/>
        <end position="262"/>
    </location>
</feature>
<feature type="transmembrane region" description="Helical" evidence="1">
    <location>
        <begin position="269"/>
        <end position="289"/>
    </location>
</feature>
<feature type="transmembrane region" description="Helical" evidence="1">
    <location>
        <begin position="304"/>
        <end position="324"/>
    </location>
</feature>
<feature type="transmembrane region" description="Helical" evidence="1">
    <location>
        <begin position="413"/>
        <end position="433"/>
    </location>
</feature>
<feature type="transmembrane region" description="Helical" evidence="1">
    <location>
        <begin position="443"/>
        <end position="463"/>
    </location>
</feature>
<organism>
    <name type="scientific">Bacillus subtilis (strain 168)</name>
    <dbReference type="NCBI Taxonomy" id="224308"/>
    <lineage>
        <taxon>Bacteria</taxon>
        <taxon>Bacillati</taxon>
        <taxon>Bacillota</taxon>
        <taxon>Bacilli</taxon>
        <taxon>Bacillales</taxon>
        <taxon>Bacillaceae</taxon>
        <taxon>Bacillus</taxon>
    </lineage>
</organism>
<proteinExistence type="predicted"/>
<protein>
    <recommendedName>
        <fullName>Uncharacterized membrane protein YhfA</fullName>
    </recommendedName>
</protein>
<gene>
    <name type="primary">yhfA</name>
    <name type="ordered locus">BSU10080</name>
</gene>
<reference key="1">
    <citation type="journal article" date="1998" name="Microbiology">
        <title>The 172 kb prkA-addAB region from 83 degrees to 97 degrees of the Bacillus subtilis chromosome contains several dysfunctional genes, the glyB marker, many genes encoding transporter proteins, and the ubiquitous hit gene.</title>
        <authorList>
            <person name="Noback M.A."/>
            <person name="Holsappel S."/>
            <person name="Kiewiet R."/>
            <person name="Terpstra P."/>
            <person name="Wambutt R."/>
            <person name="Wedler H."/>
            <person name="Venema G."/>
            <person name="Bron S."/>
        </authorList>
    </citation>
    <scope>NUCLEOTIDE SEQUENCE [GENOMIC DNA]</scope>
    <source>
        <strain>168</strain>
    </source>
</reference>
<reference key="2">
    <citation type="journal article" date="1997" name="Nature">
        <title>The complete genome sequence of the Gram-positive bacterium Bacillus subtilis.</title>
        <authorList>
            <person name="Kunst F."/>
            <person name="Ogasawara N."/>
            <person name="Moszer I."/>
            <person name="Albertini A.M."/>
            <person name="Alloni G."/>
            <person name="Azevedo V."/>
            <person name="Bertero M.G."/>
            <person name="Bessieres P."/>
            <person name="Bolotin A."/>
            <person name="Borchert S."/>
            <person name="Borriss R."/>
            <person name="Boursier L."/>
            <person name="Brans A."/>
            <person name="Braun M."/>
            <person name="Brignell S.C."/>
            <person name="Bron S."/>
            <person name="Brouillet S."/>
            <person name="Bruschi C.V."/>
            <person name="Caldwell B."/>
            <person name="Capuano V."/>
            <person name="Carter N.M."/>
            <person name="Choi S.-K."/>
            <person name="Codani J.-J."/>
            <person name="Connerton I.F."/>
            <person name="Cummings N.J."/>
            <person name="Daniel R.A."/>
            <person name="Denizot F."/>
            <person name="Devine K.M."/>
            <person name="Duesterhoeft A."/>
            <person name="Ehrlich S.D."/>
            <person name="Emmerson P.T."/>
            <person name="Entian K.-D."/>
            <person name="Errington J."/>
            <person name="Fabret C."/>
            <person name="Ferrari E."/>
            <person name="Foulger D."/>
            <person name="Fritz C."/>
            <person name="Fujita M."/>
            <person name="Fujita Y."/>
            <person name="Fuma S."/>
            <person name="Galizzi A."/>
            <person name="Galleron N."/>
            <person name="Ghim S.-Y."/>
            <person name="Glaser P."/>
            <person name="Goffeau A."/>
            <person name="Golightly E.J."/>
            <person name="Grandi G."/>
            <person name="Guiseppi G."/>
            <person name="Guy B.J."/>
            <person name="Haga K."/>
            <person name="Haiech J."/>
            <person name="Harwood C.R."/>
            <person name="Henaut A."/>
            <person name="Hilbert H."/>
            <person name="Holsappel S."/>
            <person name="Hosono S."/>
            <person name="Hullo M.-F."/>
            <person name="Itaya M."/>
            <person name="Jones L.-M."/>
            <person name="Joris B."/>
            <person name="Karamata D."/>
            <person name="Kasahara Y."/>
            <person name="Klaerr-Blanchard M."/>
            <person name="Klein C."/>
            <person name="Kobayashi Y."/>
            <person name="Koetter P."/>
            <person name="Koningstein G."/>
            <person name="Krogh S."/>
            <person name="Kumano M."/>
            <person name="Kurita K."/>
            <person name="Lapidus A."/>
            <person name="Lardinois S."/>
            <person name="Lauber J."/>
            <person name="Lazarevic V."/>
            <person name="Lee S.-M."/>
            <person name="Levine A."/>
            <person name="Liu H."/>
            <person name="Masuda S."/>
            <person name="Mauel C."/>
            <person name="Medigue C."/>
            <person name="Medina N."/>
            <person name="Mellado R.P."/>
            <person name="Mizuno M."/>
            <person name="Moestl D."/>
            <person name="Nakai S."/>
            <person name="Noback M."/>
            <person name="Noone D."/>
            <person name="O'Reilly M."/>
            <person name="Ogawa K."/>
            <person name="Ogiwara A."/>
            <person name="Oudega B."/>
            <person name="Park S.-H."/>
            <person name="Parro V."/>
            <person name="Pohl T.M."/>
            <person name="Portetelle D."/>
            <person name="Porwollik S."/>
            <person name="Prescott A.M."/>
            <person name="Presecan E."/>
            <person name="Pujic P."/>
            <person name="Purnelle B."/>
            <person name="Rapoport G."/>
            <person name="Rey M."/>
            <person name="Reynolds S."/>
            <person name="Rieger M."/>
            <person name="Rivolta C."/>
            <person name="Rocha E."/>
            <person name="Roche B."/>
            <person name="Rose M."/>
            <person name="Sadaie Y."/>
            <person name="Sato T."/>
            <person name="Scanlan E."/>
            <person name="Schleich S."/>
            <person name="Schroeter R."/>
            <person name="Scoffone F."/>
            <person name="Sekiguchi J."/>
            <person name="Sekowska A."/>
            <person name="Seror S.J."/>
            <person name="Serror P."/>
            <person name="Shin B.-S."/>
            <person name="Soldo B."/>
            <person name="Sorokin A."/>
            <person name="Tacconi E."/>
            <person name="Takagi T."/>
            <person name="Takahashi H."/>
            <person name="Takemaru K."/>
            <person name="Takeuchi M."/>
            <person name="Tamakoshi A."/>
            <person name="Tanaka T."/>
            <person name="Terpstra P."/>
            <person name="Tognoni A."/>
            <person name="Tosato V."/>
            <person name="Uchiyama S."/>
            <person name="Vandenbol M."/>
            <person name="Vannier F."/>
            <person name="Vassarotti A."/>
            <person name="Viari A."/>
            <person name="Wambutt R."/>
            <person name="Wedler E."/>
            <person name="Wedler H."/>
            <person name="Weitzenegger T."/>
            <person name="Winters P."/>
            <person name="Wipat A."/>
            <person name="Yamamoto H."/>
            <person name="Yamane K."/>
            <person name="Yasumoto K."/>
            <person name="Yata K."/>
            <person name="Yoshida K."/>
            <person name="Yoshikawa H.-F."/>
            <person name="Zumstein E."/>
            <person name="Yoshikawa H."/>
            <person name="Danchin A."/>
        </authorList>
    </citation>
    <scope>NUCLEOTIDE SEQUENCE [LARGE SCALE GENOMIC DNA]</scope>
    <source>
        <strain>168</strain>
    </source>
</reference>